<accession>P64524</accession>
<accession>P76365</accession>
<accession>Q2MAZ1</accession>
<name>CBTA_ECOLI</name>
<keyword id="KW-0133">Cell shape</keyword>
<keyword id="KW-0963">Cytoplasm</keyword>
<keyword id="KW-1185">Reference proteome</keyword>
<keyword id="KW-1277">Toxin-antitoxin system</keyword>
<dbReference type="EMBL" id="U00096">
    <property type="protein sequence ID" value="AAC75066.1"/>
    <property type="molecule type" value="Genomic_DNA"/>
</dbReference>
<dbReference type="EMBL" id="AP009048">
    <property type="protein sequence ID" value="BAE76565.1"/>
    <property type="molecule type" value="Genomic_DNA"/>
</dbReference>
<dbReference type="PIR" id="D64965">
    <property type="entry name" value="D64965"/>
</dbReference>
<dbReference type="RefSeq" id="NP_416509.1">
    <property type="nucleotide sequence ID" value="NC_000913.3"/>
</dbReference>
<dbReference type="RefSeq" id="WP_000854814.1">
    <property type="nucleotide sequence ID" value="NZ_LN832404.1"/>
</dbReference>
<dbReference type="BioGRID" id="4261508">
    <property type="interactions" value="15"/>
</dbReference>
<dbReference type="FunCoup" id="P64524">
    <property type="interactions" value="37"/>
</dbReference>
<dbReference type="IntAct" id="P64524">
    <property type="interactions" value="6"/>
</dbReference>
<dbReference type="STRING" id="511145.b2005"/>
<dbReference type="PaxDb" id="511145-b2005"/>
<dbReference type="EnsemblBacteria" id="AAC75066">
    <property type="protein sequence ID" value="AAC75066"/>
    <property type="gene ID" value="b2005"/>
</dbReference>
<dbReference type="GeneID" id="946534"/>
<dbReference type="KEGG" id="ecj:JW1987"/>
<dbReference type="KEGG" id="eco:b2005"/>
<dbReference type="KEGG" id="ecoc:C3026_11305"/>
<dbReference type="PATRIC" id="fig|1411691.4.peg.248"/>
<dbReference type="EchoBASE" id="EB3170"/>
<dbReference type="eggNOG" id="ENOG5030KUQ">
    <property type="taxonomic scope" value="Bacteria"/>
</dbReference>
<dbReference type="HOGENOM" id="CLU_129204_1_0_6"/>
<dbReference type="InParanoid" id="P64524"/>
<dbReference type="OrthoDB" id="6580484at2"/>
<dbReference type="PhylomeDB" id="P64524"/>
<dbReference type="BioCyc" id="EcoCyc:G7085-MONOMER"/>
<dbReference type="PRO" id="PR:P64524"/>
<dbReference type="Proteomes" id="UP000000625">
    <property type="component" value="Chromosome"/>
</dbReference>
<dbReference type="GO" id="GO:0005737">
    <property type="term" value="C:cytoplasm"/>
    <property type="evidence" value="ECO:0007669"/>
    <property type="project" value="UniProtKB-SubCell"/>
</dbReference>
<dbReference type="GO" id="GO:0008092">
    <property type="term" value="F:cytoskeletal protein binding"/>
    <property type="evidence" value="ECO:0000314"/>
    <property type="project" value="EcoCyc"/>
</dbReference>
<dbReference type="GO" id="GO:0001896">
    <property type="term" value="P:autolysis"/>
    <property type="evidence" value="ECO:0000315"/>
    <property type="project" value="EcoCyc"/>
</dbReference>
<dbReference type="GO" id="GO:0051494">
    <property type="term" value="P:negative regulation of cytoskeleton organization"/>
    <property type="evidence" value="ECO:0000315"/>
    <property type="project" value="EcoCyc"/>
</dbReference>
<dbReference type="GO" id="GO:2000245">
    <property type="term" value="P:negative regulation of FtsZ-dependent cytokinesis"/>
    <property type="evidence" value="ECO:0000315"/>
    <property type="project" value="EcoCyc"/>
</dbReference>
<dbReference type="GO" id="GO:0008360">
    <property type="term" value="P:regulation of cell shape"/>
    <property type="evidence" value="ECO:0000315"/>
    <property type="project" value="EcoCyc"/>
</dbReference>
<dbReference type="InterPro" id="IPR009610">
    <property type="entry name" value="CbtA_toxin"/>
</dbReference>
<dbReference type="Pfam" id="PF06755">
    <property type="entry name" value="CbtA_toxin"/>
    <property type="match status" value="1"/>
</dbReference>
<organism>
    <name type="scientific">Escherichia coli (strain K12)</name>
    <dbReference type="NCBI Taxonomy" id="83333"/>
    <lineage>
        <taxon>Bacteria</taxon>
        <taxon>Pseudomonadati</taxon>
        <taxon>Pseudomonadota</taxon>
        <taxon>Gammaproteobacteria</taxon>
        <taxon>Enterobacterales</taxon>
        <taxon>Enterobacteriaceae</taxon>
        <taxon>Escherichia</taxon>
    </lineage>
</organism>
<reference key="1">
    <citation type="journal article" date="1997" name="Science">
        <title>The complete genome sequence of Escherichia coli K-12.</title>
        <authorList>
            <person name="Blattner F.R."/>
            <person name="Plunkett G. III"/>
            <person name="Bloch C.A."/>
            <person name="Perna N.T."/>
            <person name="Burland V."/>
            <person name="Riley M."/>
            <person name="Collado-Vides J."/>
            <person name="Glasner J.D."/>
            <person name="Rode C.K."/>
            <person name="Mayhew G.F."/>
            <person name="Gregor J."/>
            <person name="Davis N.W."/>
            <person name="Kirkpatrick H.A."/>
            <person name="Goeden M.A."/>
            <person name="Rose D.J."/>
            <person name="Mau B."/>
            <person name="Shao Y."/>
        </authorList>
    </citation>
    <scope>NUCLEOTIDE SEQUENCE [LARGE SCALE GENOMIC DNA]</scope>
    <source>
        <strain>K12 / MG1655 / ATCC 47076</strain>
    </source>
</reference>
<reference key="2">
    <citation type="journal article" date="2006" name="Mol. Syst. Biol.">
        <title>Highly accurate genome sequences of Escherichia coli K-12 strains MG1655 and W3110.</title>
        <authorList>
            <person name="Hayashi K."/>
            <person name="Morooka N."/>
            <person name="Yamamoto Y."/>
            <person name="Fujita K."/>
            <person name="Isono K."/>
            <person name="Choi S."/>
            <person name="Ohtsubo E."/>
            <person name="Baba T."/>
            <person name="Wanner B.L."/>
            <person name="Mori H."/>
            <person name="Horiuchi T."/>
        </authorList>
    </citation>
    <scope>NUCLEOTIDE SEQUENCE [LARGE SCALE GENOMIC DNA]</scope>
    <source>
        <strain>K12 / W3110 / ATCC 27325 / DSM 5911</strain>
    </source>
</reference>
<reference key="3">
    <citation type="journal article" date="2003" name="J. Bacteriol.">
        <title>A novel family of Escherichia coli toxin-antitoxin gene pairs.</title>
        <authorList>
            <person name="Brown J.M."/>
            <person name="Shaw K.J."/>
        </authorList>
    </citation>
    <scope>FUNCTION AS A TOXIN</scope>
    <source>
        <strain>K12 / MG1655 / ATCC 47076</strain>
    </source>
</reference>
<reference key="4">
    <citation type="journal article" date="2011" name="Mol. Microbiol.">
        <title>YeeV is an Escherichia coli toxin that inhibits cell division by targeting the cytoskeleton proteins, FtsZ and MreB.</title>
        <authorList>
            <person name="Tan Q."/>
            <person name="Awano N."/>
            <person name="Inouye M."/>
        </authorList>
    </citation>
    <scope>FUNCTION AS A TOXIN</scope>
    <scope>INTERACTION WITH FTSZ AND MREB</scope>
    <scope>SUBUNIT</scope>
    <scope>DISRUPTION PHENOTYPE</scope>
    <scope>MUTAGENESIS OF 1-MET--ARG-15</scope>
    <source>
        <strain>K12 / BW25113</strain>
    </source>
</reference>
<reference key="5">
    <citation type="journal article" date="2012" name="Mol. Microbiol.">
        <title>YeeU enhances the bundling of cytoskeletal polymers of MreB and FtsZ, antagonizing the CbtA (YeeV) toxicity in Escherichia coli.</title>
        <authorList>
            <person name="Masuda H."/>
            <person name="Tan Q."/>
            <person name="Awano N."/>
            <person name="Wu K.P."/>
            <person name="Inouye M."/>
        </authorList>
    </citation>
    <scope>FUNCTION AS AN TOXIN</scope>
    <source>
        <strain>K12 / BW25113</strain>
    </source>
</reference>
<reference key="6">
    <citation type="journal article" date="2017" name="PLoS Genet.">
        <title>CbtA toxin of Escherichia coli inhibits cell division and cell elongation via direct and independent interactions with FtsZ and MreB.</title>
        <authorList>
            <person name="Heller D.M."/>
            <person name="Tavag M."/>
            <person name="Hochschild A."/>
        </authorList>
    </citation>
    <scope>FUNCTION AS A TOXIN</scope>
    <scope>SUBCELLULAR LOCATION</scope>
    <scope>INTERACTION WITH FTSZ AND MREB</scope>
    <scope>MUTAGENESIS OF ARG-15 AND PHE-65</scope>
</reference>
<reference key="7">
    <citation type="journal article" date="2017" name="Toxins">
        <title>Interaction of type IV toxin/antitoxin systems in cryptic prophages of Escherichia coli K-12.</title>
        <authorList>
            <person name="Wen Z."/>
            <person name="Wang P."/>
            <person name="Sun C."/>
            <person name="Guo Y."/>
            <person name="Wang X."/>
        </authorList>
    </citation>
    <scope>FUNCTION AS A TOXIN</scope>
    <scope>INTERACTION WITH FTSZ</scope>
    <scope>INDUCTION</scope>
    <scope>DISRUPTION PHENOTYPE</scope>
    <source>
        <strain>K12 / BW25113</strain>
    </source>
</reference>
<comment type="function">
    <text evidence="1 2 3 4 5">Toxic component of a type IV toxin-antitoxin (TA) system (PubMed:14594833, PubMed:21166897, PubMed:22515815, PubMed:28257056, PubMed:28931012). Acts as a dual toxin inhibitor that blocks cell division and cell elongation in genetically separable interactions with FtsZ and MreB (PubMed:28931012). Interacts with cytoskeletal proteins FtsZ and MreB; inhibits FtsZ GTP-dependent polymerization and GTPase activity as well as MreB ATP-dependent polymerization (PubMed:21166897, PubMed:28931012). Binds to both the N- and C-terminus of FtsZ, likely blocking its polymerization and localization, leading to blockage of cell division (PubMed:21166897, PubMed:28931012). Overexpression results in inhibition of growth in liquid cultures and decrease in colony formation; these effects are overcome by concomitant expression of antitoxin CbeA (YeeU) (PubMed:14594833). In other experiments cells swell, by 6 hours are lemon-shaped and by 24 hours those that have not lysed are spherical with diminished polar regions (PubMed:21166897, PubMed:28931012). Toxic effects are neutralized by cognate antitoxin CbeA, although there is no direct interaction between the 2 proteins (PubMed:14594833, PubMed:22515815). Toxic effects are also neutralized by overexpression of noncogate antitoxins YafW and YpjF (PubMed:28257056).</text>
</comment>
<comment type="subunit">
    <text evidence="2 3 5">Interacts with FtsZ (PubMed:21166897, PubMed:22515815, PubMed:28931012). Interacts with MreB (PubMed:21166897, PubMed:28931012).</text>
</comment>
<comment type="subcellular location">
    <subcellularLocation>
        <location evidence="5">Cytoplasm</location>
    </subcellularLocation>
</comment>
<comment type="induction">
    <text evidence="4">Expressed in mid-log phase at lower levels than toxin relE.</text>
</comment>
<comment type="domain">
    <text evidence="2">The N-terminal 15 residues are required for interaction with both FtsZ and MreB, while the C-terminal 63 residues are required for interaction with MreB.</text>
</comment>
<comment type="disruption phenotype">
    <text evidence="2 4">No visible phenotype (PubMed:21166897). Deletion of 3 type IV toxin genes (cbtA, ykfI, ypfJ) leads to a slight reduction in resistance to oxidative stress, has no effect on cell growth (PubMed:28257056).</text>
</comment>
<comment type="miscellaneous">
    <text evidence="8">Encoded in prophage CP4-44.</text>
</comment>
<comment type="similarity">
    <text evidence="8">Belongs to the CbtA/YkfI/YpjF toxin family.</text>
</comment>
<sequence length="124" mass="13899">MKTLPVLPGQAASSRPSPVEIWQILLSRLLDQHYGLTLNDTPFADERVIEQHIEAGISLCDAVNFLVEKYALVRTDQPGFSACTRSQLINSIDILRARRATGLMTRDNYRTVNNITLGKYPEAK</sequence>
<protein>
    <recommendedName>
        <fullName evidence="7">Cytoskeleton-binding toxin CbtA</fullName>
    </recommendedName>
    <alternativeName>
        <fullName evidence="7">Toxin CbtA</fullName>
    </alternativeName>
    <alternativeName>
        <fullName evidence="6">Toxin YeeV</fullName>
    </alternativeName>
</protein>
<evidence type="ECO:0000269" key="1">
    <source>
    </source>
</evidence>
<evidence type="ECO:0000269" key="2">
    <source>
    </source>
</evidence>
<evidence type="ECO:0000269" key="3">
    <source>
    </source>
</evidence>
<evidence type="ECO:0000269" key="4">
    <source>
    </source>
</evidence>
<evidence type="ECO:0000269" key="5">
    <source>
    </source>
</evidence>
<evidence type="ECO:0000303" key="6">
    <source>
    </source>
</evidence>
<evidence type="ECO:0000303" key="7">
    <source>
    </source>
</evidence>
<evidence type="ECO:0000305" key="8"/>
<gene>
    <name evidence="7" type="primary">cbtA</name>
    <name type="synonym">yeeV</name>
    <name type="ordered locus">b2005</name>
    <name type="ordered locus">JW1987</name>
</gene>
<feature type="chain" id="PRO_0000169116" description="Cytoskeleton-binding toxin CbtA">
    <location>
        <begin position="1"/>
        <end position="124"/>
    </location>
</feature>
<feature type="region of interest" description="Sufficient for toxicity, toxin less stabile; cells filament, protein does not interact with MreB but probably still interacts with FtsZ" evidence="2">
    <location>
        <begin position="1"/>
        <end position="73"/>
    </location>
</feature>
<feature type="region of interest" description="Required for interaction with MreB" evidence="2">
    <location>
        <begin position="74"/>
        <end position="124"/>
    </location>
</feature>
<feature type="mutagenesis site" description="No longer toxic, cells become lemon-shaped more quickly than wild-type on overexpression." evidence="2">
    <location>
        <begin position="1"/>
        <end position="15"/>
    </location>
</feature>
<feature type="mutagenesis site" description="Wild-type toxicity, wild-type interaction with FtsZ, no longer interacts with MreB, no longer blocks cell elongation, cells become filamentous. No longer toxic, no altered morphology; when associated with S-65." evidence="5">
    <original>R</original>
    <variation>C</variation>
    <location>
        <position position="15"/>
    </location>
</feature>
<feature type="mutagenesis site" description="Slightly reduced toxicity, wild-type interaction with MreB, no longer interacts with FtsZ, no longer blocks cell division, cells become spheroid. No longer toxic, no altered morphology; when associated with C-15." evidence="5">
    <original>F</original>
    <variation>S</variation>
    <location>
        <position position="65"/>
    </location>
</feature>
<proteinExistence type="evidence at protein level"/>